<keyword id="KW-0240">DNA-directed RNA polymerase</keyword>
<keyword id="KW-0479">Metal-binding</keyword>
<keyword id="KW-0539">Nucleus</keyword>
<keyword id="KW-1185">Reference proteome</keyword>
<keyword id="KW-0804">Transcription</keyword>
<keyword id="KW-0862">Zinc</keyword>
<name>RPAB5_ENCCU</name>
<comment type="function">
    <text evidence="1">DNA-dependent RNA polymerase catalyzes the transcription of DNA into RNA using the four ribonucleoside triphosphates as substrates. Common component of RNA polymerases I, II and III which synthesize ribosomal RNA precursors, mRNA precursors and many functional non-coding RNAs, and a small RNAs, such as 5S rRNA and tRNAs, respectively. Pol II is the central component of the basal RNA polymerase II transcription machinery. Pols are composed of mobile elements that move relative to each other. In Pol II, RBP10 is part of the core element with the central large cleft (By similarity).</text>
</comment>
<comment type="subunit">
    <text evidence="1">Component of the RNA polymerase I (Pol I), RNA polymerase II (Pol II) and RNA polymerase III (Pol III) complexes consisting of 14, 12 and 17 subunits, respectively.</text>
</comment>
<comment type="subcellular location">
    <subcellularLocation>
        <location evidence="1">Nucleus</location>
    </subcellularLocation>
</comment>
<comment type="similarity">
    <text evidence="2">Belongs to the archaeal Rpo10/eukaryotic RPB10 RNA polymerase subunit family.</text>
</comment>
<reference key="1">
    <citation type="journal article" date="2001" name="Nature">
        <title>Genome sequence and gene compaction of the eukaryote parasite Encephalitozoon cuniculi.</title>
        <authorList>
            <person name="Katinka M.D."/>
            <person name="Duprat S."/>
            <person name="Cornillot E."/>
            <person name="Metenier G."/>
            <person name="Thomarat F."/>
            <person name="Prensier G."/>
            <person name="Barbe V."/>
            <person name="Peyretaillade E."/>
            <person name="Brottier P."/>
            <person name="Wincker P."/>
            <person name="Delbac F."/>
            <person name="El Alaoui H."/>
            <person name="Peyret P."/>
            <person name="Saurin W."/>
            <person name="Gouy M."/>
            <person name="Weissenbach J."/>
            <person name="Vivares C.P."/>
        </authorList>
    </citation>
    <scope>NUCLEOTIDE SEQUENCE [LARGE SCALE GENOMIC DNA]</scope>
    <source>
        <strain>GB-M1</strain>
    </source>
</reference>
<dbReference type="EMBL" id="AL590446">
    <property type="protein sequence ID" value="CAD25392.1"/>
    <property type="molecule type" value="Genomic_DNA"/>
</dbReference>
<dbReference type="RefSeq" id="NP_585788.1">
    <property type="nucleotide sequence ID" value="NM_001041410.1"/>
</dbReference>
<dbReference type="SMR" id="Q8SRS6"/>
<dbReference type="FunCoup" id="Q8SRS6">
    <property type="interactions" value="84"/>
</dbReference>
<dbReference type="STRING" id="284813.Q8SRS6"/>
<dbReference type="GeneID" id="859211"/>
<dbReference type="KEGG" id="ecu:ECU06_0320"/>
<dbReference type="VEuPathDB" id="MicrosporidiaDB:ECU06_0320"/>
<dbReference type="HOGENOM" id="CLU_143122_2_1_1"/>
<dbReference type="InParanoid" id="Q8SRS6"/>
<dbReference type="OMA" id="YCCRRMF"/>
<dbReference type="OrthoDB" id="10258858at2759"/>
<dbReference type="Proteomes" id="UP000000819">
    <property type="component" value="Chromosome VI"/>
</dbReference>
<dbReference type="GO" id="GO:0005736">
    <property type="term" value="C:RNA polymerase I complex"/>
    <property type="evidence" value="ECO:0007669"/>
    <property type="project" value="TreeGrafter"/>
</dbReference>
<dbReference type="GO" id="GO:0005665">
    <property type="term" value="C:RNA polymerase II, core complex"/>
    <property type="evidence" value="ECO:0007669"/>
    <property type="project" value="TreeGrafter"/>
</dbReference>
<dbReference type="GO" id="GO:0005666">
    <property type="term" value="C:RNA polymerase III complex"/>
    <property type="evidence" value="ECO:0007669"/>
    <property type="project" value="TreeGrafter"/>
</dbReference>
<dbReference type="GO" id="GO:0003677">
    <property type="term" value="F:DNA binding"/>
    <property type="evidence" value="ECO:0007669"/>
    <property type="project" value="InterPro"/>
</dbReference>
<dbReference type="GO" id="GO:0003899">
    <property type="term" value="F:DNA-directed RNA polymerase activity"/>
    <property type="evidence" value="ECO:0007669"/>
    <property type="project" value="InterPro"/>
</dbReference>
<dbReference type="GO" id="GO:0008270">
    <property type="term" value="F:zinc ion binding"/>
    <property type="evidence" value="ECO:0007669"/>
    <property type="project" value="InterPro"/>
</dbReference>
<dbReference type="GO" id="GO:0006360">
    <property type="term" value="P:transcription by RNA polymerase I"/>
    <property type="evidence" value="ECO:0007669"/>
    <property type="project" value="TreeGrafter"/>
</dbReference>
<dbReference type="GO" id="GO:0006366">
    <property type="term" value="P:transcription by RNA polymerase II"/>
    <property type="evidence" value="ECO:0007669"/>
    <property type="project" value="TreeGrafter"/>
</dbReference>
<dbReference type="GO" id="GO:0042797">
    <property type="term" value="P:tRNA transcription by RNA polymerase III"/>
    <property type="evidence" value="ECO:0007669"/>
    <property type="project" value="TreeGrafter"/>
</dbReference>
<dbReference type="FunFam" id="1.10.10.60:FF:000024">
    <property type="entry name" value="DNA-directed RNA polymerases I, II, and III subunit"/>
    <property type="match status" value="1"/>
</dbReference>
<dbReference type="Gene3D" id="1.10.10.60">
    <property type="entry name" value="Homeodomain-like"/>
    <property type="match status" value="1"/>
</dbReference>
<dbReference type="HAMAP" id="MF_00250">
    <property type="entry name" value="RNApol_arch_Rpo10"/>
    <property type="match status" value="1"/>
</dbReference>
<dbReference type="InterPro" id="IPR023580">
    <property type="entry name" value="RNA_pol_su_RPB10"/>
</dbReference>
<dbReference type="InterPro" id="IPR020789">
    <property type="entry name" value="RNA_pol_suN_Zn-BS"/>
</dbReference>
<dbReference type="InterPro" id="IPR000268">
    <property type="entry name" value="RPABC5/Rpb10"/>
</dbReference>
<dbReference type="NCBIfam" id="NF003089">
    <property type="entry name" value="PRK04016.1"/>
    <property type="match status" value="1"/>
</dbReference>
<dbReference type="PANTHER" id="PTHR23431:SF3">
    <property type="entry name" value="DNA-DIRECTED RNA POLYMERASES I, II, AND III SUBUNIT RPABC5"/>
    <property type="match status" value="1"/>
</dbReference>
<dbReference type="PANTHER" id="PTHR23431">
    <property type="entry name" value="DNA-DIRECTED RNA POLYMERASES I, II, AND III SUBUNIT RPABC5 FAMILY MEMBER"/>
    <property type="match status" value="1"/>
</dbReference>
<dbReference type="Pfam" id="PF01194">
    <property type="entry name" value="RNA_pol_N"/>
    <property type="match status" value="1"/>
</dbReference>
<dbReference type="PIRSF" id="PIRSF005653">
    <property type="entry name" value="RNA_pol_N/8_sub"/>
    <property type="match status" value="1"/>
</dbReference>
<dbReference type="SUPFAM" id="SSF46924">
    <property type="entry name" value="RNA polymerase subunit RPB10"/>
    <property type="match status" value="1"/>
</dbReference>
<dbReference type="PROSITE" id="PS01112">
    <property type="entry name" value="RNA_POL_N_8KD"/>
    <property type="match status" value="1"/>
</dbReference>
<feature type="chain" id="PRO_0000121340" description="DNA-directed RNA polymerases I, II, and III subunit RPABC5">
    <location>
        <begin position="1"/>
        <end position="72"/>
    </location>
</feature>
<feature type="binding site" evidence="1">
    <location>
        <position position="7"/>
    </location>
    <ligand>
        <name>Zn(2+)</name>
        <dbReference type="ChEBI" id="CHEBI:29105"/>
    </ligand>
</feature>
<feature type="binding site" evidence="1">
    <location>
        <position position="10"/>
    </location>
    <ligand>
        <name>Zn(2+)</name>
        <dbReference type="ChEBI" id="CHEBI:29105"/>
    </ligand>
</feature>
<feature type="binding site" evidence="1">
    <location>
        <position position="44"/>
    </location>
    <ligand>
        <name>Zn(2+)</name>
        <dbReference type="ChEBI" id="CHEBI:29105"/>
    </ligand>
</feature>
<feature type="binding site" evidence="1">
    <location>
        <position position="45"/>
    </location>
    <ligand>
        <name>Zn(2+)</name>
        <dbReference type="ChEBI" id="CHEBI:29105"/>
    </ligand>
</feature>
<protein>
    <recommendedName>
        <fullName>DNA-directed RNA polymerases I, II, and III subunit RPABC5</fullName>
        <shortName>RNA polymerases I, II, and III subunit ABC5</shortName>
    </recommendedName>
    <alternativeName>
        <fullName>RPB10</fullName>
    </alternativeName>
</protein>
<proteinExistence type="inferred from homology"/>
<accession>Q8SRS6</accession>
<evidence type="ECO:0000250" key="1"/>
<evidence type="ECO:0000305" key="2"/>
<organism>
    <name type="scientific">Encephalitozoon cuniculi (strain GB-M1)</name>
    <name type="common">Microsporidian parasite</name>
    <dbReference type="NCBI Taxonomy" id="284813"/>
    <lineage>
        <taxon>Eukaryota</taxon>
        <taxon>Fungi</taxon>
        <taxon>Fungi incertae sedis</taxon>
        <taxon>Microsporidia</taxon>
        <taxon>Unikaryonidae</taxon>
        <taxon>Encephalitozoon</taxon>
    </lineage>
</organism>
<gene>
    <name type="primary">RPB10</name>
    <name type="ordered locus">ECU06_0320</name>
</gene>
<sequence>MIIPIRCFTCGKEISSKWEPYQELLKIDKGKAEALDELGMRRICCRRMFLGHVDIVDKLLKFDIVKDFTQRS</sequence>